<feature type="chain" id="PRO_1000013462" description="Large ribosomal subunit protein bL34">
    <location>
        <begin position="1"/>
        <end position="44"/>
    </location>
</feature>
<feature type="region of interest" description="Disordered" evidence="2">
    <location>
        <begin position="1"/>
        <end position="44"/>
    </location>
</feature>
<feature type="compositionally biased region" description="Basic residues" evidence="2">
    <location>
        <begin position="1"/>
        <end position="19"/>
    </location>
</feature>
<feature type="compositionally biased region" description="Basic residues" evidence="2">
    <location>
        <begin position="26"/>
        <end position="44"/>
    </location>
</feature>
<sequence length="44" mass="5265">MKRTYQPSKLRRARKHGFRNRMSTKNGRRVLAARRRKGRKVLAA</sequence>
<gene>
    <name evidence="1" type="primary">rpmH</name>
    <name type="ordered locus">SPD_1790</name>
</gene>
<keyword id="KW-1185">Reference proteome</keyword>
<keyword id="KW-0687">Ribonucleoprotein</keyword>
<keyword id="KW-0689">Ribosomal protein</keyword>
<name>RL34_STRP2</name>
<protein>
    <recommendedName>
        <fullName evidence="1">Large ribosomal subunit protein bL34</fullName>
    </recommendedName>
    <alternativeName>
        <fullName evidence="3">50S ribosomal protein L34</fullName>
    </alternativeName>
</protein>
<evidence type="ECO:0000255" key="1">
    <source>
        <dbReference type="HAMAP-Rule" id="MF_00391"/>
    </source>
</evidence>
<evidence type="ECO:0000256" key="2">
    <source>
        <dbReference type="SAM" id="MobiDB-lite"/>
    </source>
</evidence>
<evidence type="ECO:0000305" key="3"/>
<reference key="1">
    <citation type="journal article" date="2007" name="J. Bacteriol.">
        <title>Genome sequence of Avery's virulent serotype 2 strain D39 of Streptococcus pneumoniae and comparison with that of unencapsulated laboratory strain R6.</title>
        <authorList>
            <person name="Lanie J.A."/>
            <person name="Ng W.-L."/>
            <person name="Kazmierczak K.M."/>
            <person name="Andrzejewski T.M."/>
            <person name="Davidsen T.M."/>
            <person name="Wayne K.J."/>
            <person name="Tettelin H."/>
            <person name="Glass J.I."/>
            <person name="Winkler M.E."/>
        </authorList>
    </citation>
    <scope>NUCLEOTIDE SEQUENCE [LARGE SCALE GENOMIC DNA]</scope>
    <source>
        <strain>D39 / NCTC 7466</strain>
    </source>
</reference>
<accession>Q04IH6</accession>
<dbReference type="EMBL" id="CP000410">
    <property type="protein sequence ID" value="ABJ55375.1"/>
    <property type="molecule type" value="Genomic_DNA"/>
</dbReference>
<dbReference type="RefSeq" id="WP_000831905.1">
    <property type="nucleotide sequence ID" value="NZ_JAMLJR010000010.1"/>
</dbReference>
<dbReference type="SMR" id="Q04IH6"/>
<dbReference type="PaxDb" id="373153-SPD_1790"/>
<dbReference type="GeneID" id="93738550"/>
<dbReference type="KEGG" id="spd:SPD_1790"/>
<dbReference type="eggNOG" id="COG0230">
    <property type="taxonomic scope" value="Bacteria"/>
</dbReference>
<dbReference type="HOGENOM" id="CLU_129938_2_0_9"/>
<dbReference type="BioCyc" id="SPNE373153:G1G6V-1935-MONOMER"/>
<dbReference type="Proteomes" id="UP000001452">
    <property type="component" value="Chromosome"/>
</dbReference>
<dbReference type="GO" id="GO:1990904">
    <property type="term" value="C:ribonucleoprotein complex"/>
    <property type="evidence" value="ECO:0007669"/>
    <property type="project" value="UniProtKB-KW"/>
</dbReference>
<dbReference type="GO" id="GO:0005840">
    <property type="term" value="C:ribosome"/>
    <property type="evidence" value="ECO:0007669"/>
    <property type="project" value="UniProtKB-KW"/>
</dbReference>
<dbReference type="GO" id="GO:0003735">
    <property type="term" value="F:structural constituent of ribosome"/>
    <property type="evidence" value="ECO:0007669"/>
    <property type="project" value="InterPro"/>
</dbReference>
<dbReference type="GO" id="GO:0006412">
    <property type="term" value="P:translation"/>
    <property type="evidence" value="ECO:0007669"/>
    <property type="project" value="UniProtKB-UniRule"/>
</dbReference>
<dbReference type="FunFam" id="1.10.287.3980:FF:000001">
    <property type="entry name" value="Mitochondrial ribosomal protein L34"/>
    <property type="match status" value="1"/>
</dbReference>
<dbReference type="Gene3D" id="1.10.287.3980">
    <property type="match status" value="1"/>
</dbReference>
<dbReference type="HAMAP" id="MF_00391">
    <property type="entry name" value="Ribosomal_bL34"/>
    <property type="match status" value="1"/>
</dbReference>
<dbReference type="InterPro" id="IPR000271">
    <property type="entry name" value="Ribosomal_bL34"/>
</dbReference>
<dbReference type="InterPro" id="IPR020939">
    <property type="entry name" value="Ribosomal_bL34_CS"/>
</dbReference>
<dbReference type="NCBIfam" id="TIGR01030">
    <property type="entry name" value="rpmH_bact"/>
    <property type="match status" value="1"/>
</dbReference>
<dbReference type="PANTHER" id="PTHR14503:SF4">
    <property type="entry name" value="LARGE RIBOSOMAL SUBUNIT PROTEIN BL34M"/>
    <property type="match status" value="1"/>
</dbReference>
<dbReference type="PANTHER" id="PTHR14503">
    <property type="entry name" value="MITOCHONDRIAL RIBOSOMAL PROTEIN 34 FAMILY MEMBER"/>
    <property type="match status" value="1"/>
</dbReference>
<dbReference type="Pfam" id="PF00468">
    <property type="entry name" value="Ribosomal_L34"/>
    <property type="match status" value="1"/>
</dbReference>
<dbReference type="PROSITE" id="PS00784">
    <property type="entry name" value="RIBOSOMAL_L34"/>
    <property type="match status" value="1"/>
</dbReference>
<organism>
    <name type="scientific">Streptococcus pneumoniae serotype 2 (strain D39 / NCTC 7466)</name>
    <dbReference type="NCBI Taxonomy" id="373153"/>
    <lineage>
        <taxon>Bacteria</taxon>
        <taxon>Bacillati</taxon>
        <taxon>Bacillota</taxon>
        <taxon>Bacilli</taxon>
        <taxon>Lactobacillales</taxon>
        <taxon>Streptococcaceae</taxon>
        <taxon>Streptococcus</taxon>
    </lineage>
</organism>
<comment type="similarity">
    <text evidence="1">Belongs to the bacterial ribosomal protein bL34 family.</text>
</comment>
<proteinExistence type="inferred from homology"/>